<accession>A9R0V7</accession>
<comment type="function">
    <text evidence="1">Catalyzes the attachment of alanine to tRNA(Ala) in a two-step reaction: alanine is first activated by ATP to form Ala-AMP and then transferred to the acceptor end of tRNA(Ala). Also edits incorrectly charged Ser-tRNA(Ala) and Gly-tRNA(Ala) via its editing domain.</text>
</comment>
<comment type="catalytic activity">
    <reaction evidence="1">
        <text>tRNA(Ala) + L-alanine + ATP = L-alanyl-tRNA(Ala) + AMP + diphosphate</text>
        <dbReference type="Rhea" id="RHEA:12540"/>
        <dbReference type="Rhea" id="RHEA-COMP:9657"/>
        <dbReference type="Rhea" id="RHEA-COMP:9923"/>
        <dbReference type="ChEBI" id="CHEBI:30616"/>
        <dbReference type="ChEBI" id="CHEBI:33019"/>
        <dbReference type="ChEBI" id="CHEBI:57972"/>
        <dbReference type="ChEBI" id="CHEBI:78442"/>
        <dbReference type="ChEBI" id="CHEBI:78497"/>
        <dbReference type="ChEBI" id="CHEBI:456215"/>
        <dbReference type="EC" id="6.1.1.7"/>
    </reaction>
</comment>
<comment type="cofactor">
    <cofactor evidence="1">
        <name>Zn(2+)</name>
        <dbReference type="ChEBI" id="CHEBI:29105"/>
    </cofactor>
    <text evidence="1">Binds 1 zinc ion per subunit.</text>
</comment>
<comment type="subunit">
    <text evidence="1">Homotetramer.</text>
</comment>
<comment type="subcellular location">
    <subcellularLocation>
        <location evidence="1">Cytoplasm</location>
    </subcellularLocation>
</comment>
<comment type="domain">
    <text evidence="1">Consists of three domains; the N-terminal catalytic domain, the editing domain and the C-terminal C-Ala domain. The editing domain removes incorrectly charged amino acids, while the C-Ala domain, along with tRNA(Ala), serves as a bridge to cooperatively bring together the editing and aminoacylation centers thus stimulating deacylation of misacylated tRNAs.</text>
</comment>
<comment type="similarity">
    <text evidence="1">Belongs to the class-II aminoacyl-tRNA synthetase family.</text>
</comment>
<sequence length="875" mass="96331">MSKSTAEIRQAFLDFFHSKGHQVVSSSTLVPNNDPTLLFTNAGMNQFKDVFLGLDKRAYSRATTSQRCVRAGGKHNDLENVGYTARHHTFFEMLGNFSFGDYFKHDAINFAWELLTSEQWFNLPKEKLWVTVYETDDEAYNIWANEVGVPHERIIRIGDNKGGAFASDNFWQMGDTGPCGPCSEIFFDHGDHIWGGPPGSAEEDGDRYIEIWNIVFMQFNRQSDGTMLPLPKPSVDTGMGLERIAAVLQHVNSNYEIDLFRDLIAAVADVTGATDLSSKSLRVIADHIRSCAFLISDGVIPSNENRGYVLRRIIRRAIRHGNMLGAKETFFYKLVAPLIAVMGPAAAELKQQQAMVEQVLKTEEEQFARTLERGLALLDDELSKLTGDTLDGETAFRLYDTYGFPVDLTADVCRERNLKVDEAGFEQAMEAQRRRARESSGFGADYNSLIRVDSASQFSGYDHVQQHATVTALFRNGEAVDEIHAGEEAVVVLNRTPFYGESGGQVGDKGELKNATATFSVTDTQKYGQAIGHVGILTTGTLRVNHSVEALVDVVRRNRIRLNHSATHLLHAALRNVLGEHVAQKGSLVNDKYLRFDFSHFEAMKPEQIRLVEDLVNEQIRRNMPVQTEVMELDAAKEKGAMALFGEKYDDQVRVLTMGDFSTELCGGTHASRTGDIGLFRILTESGTAAGIRRIEAVTGEGAIALLHQQSDLLQDVAHLVKGDIHNLADKVRAVLDRSKMLERELQQLKDQQAAQESASLSSSAKLINGVKLLVSQLDNVEPKMLRTMVDDLKNQLGSAIIVLATTADDKVSLIVGVTKDLTGKVKAGELIADIAQQVGGKGGGRPDMAQAGGTDVQALPAALASVEAWVASRM</sequence>
<organism>
    <name type="scientific">Yersinia pestis bv. Antiqua (strain Angola)</name>
    <dbReference type="NCBI Taxonomy" id="349746"/>
    <lineage>
        <taxon>Bacteria</taxon>
        <taxon>Pseudomonadati</taxon>
        <taxon>Pseudomonadota</taxon>
        <taxon>Gammaproteobacteria</taxon>
        <taxon>Enterobacterales</taxon>
        <taxon>Yersiniaceae</taxon>
        <taxon>Yersinia</taxon>
    </lineage>
</organism>
<reference key="1">
    <citation type="journal article" date="2010" name="J. Bacteriol.">
        <title>Genome sequence of the deep-rooted Yersinia pestis strain Angola reveals new insights into the evolution and pangenome of the plague bacterium.</title>
        <authorList>
            <person name="Eppinger M."/>
            <person name="Worsham P.L."/>
            <person name="Nikolich M.P."/>
            <person name="Riley D.R."/>
            <person name="Sebastian Y."/>
            <person name="Mou S."/>
            <person name="Achtman M."/>
            <person name="Lindler L.E."/>
            <person name="Ravel J."/>
        </authorList>
    </citation>
    <scope>NUCLEOTIDE SEQUENCE [LARGE SCALE GENOMIC DNA]</scope>
    <source>
        <strain>Angola</strain>
    </source>
</reference>
<feature type="chain" id="PRO_0000347871" description="Alanine--tRNA ligase">
    <location>
        <begin position="1"/>
        <end position="875"/>
    </location>
</feature>
<feature type="binding site" evidence="1">
    <location>
        <position position="564"/>
    </location>
    <ligand>
        <name>Zn(2+)</name>
        <dbReference type="ChEBI" id="CHEBI:29105"/>
    </ligand>
</feature>
<feature type="binding site" evidence="1">
    <location>
        <position position="568"/>
    </location>
    <ligand>
        <name>Zn(2+)</name>
        <dbReference type="ChEBI" id="CHEBI:29105"/>
    </ligand>
</feature>
<feature type="binding site" evidence="1">
    <location>
        <position position="666"/>
    </location>
    <ligand>
        <name>Zn(2+)</name>
        <dbReference type="ChEBI" id="CHEBI:29105"/>
    </ligand>
</feature>
<feature type="binding site" evidence="1">
    <location>
        <position position="670"/>
    </location>
    <ligand>
        <name>Zn(2+)</name>
        <dbReference type="ChEBI" id="CHEBI:29105"/>
    </ligand>
</feature>
<proteinExistence type="inferred from homology"/>
<protein>
    <recommendedName>
        <fullName evidence="1">Alanine--tRNA ligase</fullName>
        <ecNumber evidence="1">6.1.1.7</ecNumber>
    </recommendedName>
    <alternativeName>
        <fullName evidence="1">Alanyl-tRNA synthetase</fullName>
        <shortName evidence="1">AlaRS</shortName>
    </alternativeName>
</protein>
<gene>
    <name evidence="1" type="primary">alaS</name>
    <name type="ordered locus">YpAngola_A0898</name>
</gene>
<name>SYA_YERPG</name>
<evidence type="ECO:0000255" key="1">
    <source>
        <dbReference type="HAMAP-Rule" id="MF_00036"/>
    </source>
</evidence>
<dbReference type="EC" id="6.1.1.7" evidence="1"/>
<dbReference type="EMBL" id="CP000901">
    <property type="protein sequence ID" value="ABX87235.1"/>
    <property type="molecule type" value="Genomic_DNA"/>
</dbReference>
<dbReference type="RefSeq" id="WP_002209448.1">
    <property type="nucleotide sequence ID" value="NZ_CP009935.1"/>
</dbReference>
<dbReference type="SMR" id="A9R0V7"/>
<dbReference type="GeneID" id="57975404"/>
<dbReference type="KEGG" id="ypg:YpAngola_A0898"/>
<dbReference type="PATRIC" id="fig|349746.12.peg.1847"/>
<dbReference type="GO" id="GO:0005829">
    <property type="term" value="C:cytosol"/>
    <property type="evidence" value="ECO:0007669"/>
    <property type="project" value="TreeGrafter"/>
</dbReference>
<dbReference type="GO" id="GO:0004813">
    <property type="term" value="F:alanine-tRNA ligase activity"/>
    <property type="evidence" value="ECO:0007669"/>
    <property type="project" value="UniProtKB-UniRule"/>
</dbReference>
<dbReference type="GO" id="GO:0002161">
    <property type="term" value="F:aminoacyl-tRNA deacylase activity"/>
    <property type="evidence" value="ECO:0007669"/>
    <property type="project" value="TreeGrafter"/>
</dbReference>
<dbReference type="GO" id="GO:0005524">
    <property type="term" value="F:ATP binding"/>
    <property type="evidence" value="ECO:0007669"/>
    <property type="project" value="UniProtKB-UniRule"/>
</dbReference>
<dbReference type="GO" id="GO:0000049">
    <property type="term" value="F:tRNA binding"/>
    <property type="evidence" value="ECO:0007669"/>
    <property type="project" value="UniProtKB-KW"/>
</dbReference>
<dbReference type="GO" id="GO:0008270">
    <property type="term" value="F:zinc ion binding"/>
    <property type="evidence" value="ECO:0007669"/>
    <property type="project" value="UniProtKB-UniRule"/>
</dbReference>
<dbReference type="GO" id="GO:0006419">
    <property type="term" value="P:alanyl-tRNA aminoacylation"/>
    <property type="evidence" value="ECO:0007669"/>
    <property type="project" value="UniProtKB-UniRule"/>
</dbReference>
<dbReference type="GO" id="GO:0045892">
    <property type="term" value="P:negative regulation of DNA-templated transcription"/>
    <property type="evidence" value="ECO:0007669"/>
    <property type="project" value="TreeGrafter"/>
</dbReference>
<dbReference type="CDD" id="cd00673">
    <property type="entry name" value="AlaRS_core"/>
    <property type="match status" value="1"/>
</dbReference>
<dbReference type="FunFam" id="2.40.30.130:FF:000001">
    <property type="entry name" value="Alanine--tRNA ligase"/>
    <property type="match status" value="1"/>
</dbReference>
<dbReference type="FunFam" id="3.10.310.40:FF:000001">
    <property type="entry name" value="Alanine--tRNA ligase"/>
    <property type="match status" value="1"/>
</dbReference>
<dbReference type="FunFam" id="3.30.54.20:FF:000001">
    <property type="entry name" value="Alanine--tRNA ligase"/>
    <property type="match status" value="1"/>
</dbReference>
<dbReference type="FunFam" id="3.30.930.10:FF:000004">
    <property type="entry name" value="Alanine--tRNA ligase"/>
    <property type="match status" value="1"/>
</dbReference>
<dbReference type="FunFam" id="3.30.980.10:FF:000004">
    <property type="entry name" value="Alanine--tRNA ligase, cytoplasmic"/>
    <property type="match status" value="1"/>
</dbReference>
<dbReference type="Gene3D" id="2.40.30.130">
    <property type="match status" value="1"/>
</dbReference>
<dbReference type="Gene3D" id="3.10.310.40">
    <property type="match status" value="1"/>
</dbReference>
<dbReference type="Gene3D" id="3.30.54.20">
    <property type="match status" value="1"/>
</dbReference>
<dbReference type="Gene3D" id="6.10.250.550">
    <property type="match status" value="1"/>
</dbReference>
<dbReference type="Gene3D" id="3.30.930.10">
    <property type="entry name" value="Bira Bifunctional Protein, Domain 2"/>
    <property type="match status" value="1"/>
</dbReference>
<dbReference type="Gene3D" id="3.30.980.10">
    <property type="entry name" value="Threonyl-trna Synthetase, Chain A, domain 2"/>
    <property type="match status" value="1"/>
</dbReference>
<dbReference type="HAMAP" id="MF_00036_B">
    <property type="entry name" value="Ala_tRNA_synth_B"/>
    <property type="match status" value="1"/>
</dbReference>
<dbReference type="InterPro" id="IPR045864">
    <property type="entry name" value="aa-tRNA-synth_II/BPL/LPL"/>
</dbReference>
<dbReference type="InterPro" id="IPR002318">
    <property type="entry name" value="Ala-tRNA-lgiase_IIc"/>
</dbReference>
<dbReference type="InterPro" id="IPR018162">
    <property type="entry name" value="Ala-tRNA-ligase_IIc_anticod-bd"/>
</dbReference>
<dbReference type="InterPro" id="IPR018165">
    <property type="entry name" value="Ala-tRNA-synth_IIc_core"/>
</dbReference>
<dbReference type="InterPro" id="IPR018164">
    <property type="entry name" value="Ala-tRNA-synth_IIc_N"/>
</dbReference>
<dbReference type="InterPro" id="IPR050058">
    <property type="entry name" value="Ala-tRNA_ligase"/>
</dbReference>
<dbReference type="InterPro" id="IPR023033">
    <property type="entry name" value="Ala_tRNA_ligase_euk/bac"/>
</dbReference>
<dbReference type="InterPro" id="IPR003156">
    <property type="entry name" value="DHHA1_dom"/>
</dbReference>
<dbReference type="InterPro" id="IPR018163">
    <property type="entry name" value="Thr/Ala-tRNA-synth_IIc_edit"/>
</dbReference>
<dbReference type="InterPro" id="IPR009000">
    <property type="entry name" value="Transl_B-barrel_sf"/>
</dbReference>
<dbReference type="InterPro" id="IPR012947">
    <property type="entry name" value="tRNA_SAD"/>
</dbReference>
<dbReference type="NCBIfam" id="TIGR00344">
    <property type="entry name" value="alaS"/>
    <property type="match status" value="1"/>
</dbReference>
<dbReference type="PANTHER" id="PTHR11777:SF9">
    <property type="entry name" value="ALANINE--TRNA LIGASE, CYTOPLASMIC"/>
    <property type="match status" value="1"/>
</dbReference>
<dbReference type="PANTHER" id="PTHR11777">
    <property type="entry name" value="ALANYL-TRNA SYNTHETASE"/>
    <property type="match status" value="1"/>
</dbReference>
<dbReference type="Pfam" id="PF02272">
    <property type="entry name" value="DHHA1"/>
    <property type="match status" value="1"/>
</dbReference>
<dbReference type="Pfam" id="PF01411">
    <property type="entry name" value="tRNA-synt_2c"/>
    <property type="match status" value="1"/>
</dbReference>
<dbReference type="Pfam" id="PF07973">
    <property type="entry name" value="tRNA_SAD"/>
    <property type="match status" value="1"/>
</dbReference>
<dbReference type="PRINTS" id="PR00980">
    <property type="entry name" value="TRNASYNTHALA"/>
</dbReference>
<dbReference type="SMART" id="SM00863">
    <property type="entry name" value="tRNA_SAD"/>
    <property type="match status" value="1"/>
</dbReference>
<dbReference type="SUPFAM" id="SSF55681">
    <property type="entry name" value="Class II aaRS and biotin synthetases"/>
    <property type="match status" value="1"/>
</dbReference>
<dbReference type="SUPFAM" id="SSF101353">
    <property type="entry name" value="Putative anticodon-binding domain of alanyl-tRNA synthetase (AlaRS)"/>
    <property type="match status" value="1"/>
</dbReference>
<dbReference type="SUPFAM" id="SSF55186">
    <property type="entry name" value="ThrRS/AlaRS common domain"/>
    <property type="match status" value="1"/>
</dbReference>
<dbReference type="SUPFAM" id="SSF50447">
    <property type="entry name" value="Translation proteins"/>
    <property type="match status" value="1"/>
</dbReference>
<dbReference type="PROSITE" id="PS50860">
    <property type="entry name" value="AA_TRNA_LIGASE_II_ALA"/>
    <property type="match status" value="1"/>
</dbReference>
<keyword id="KW-0030">Aminoacyl-tRNA synthetase</keyword>
<keyword id="KW-0067">ATP-binding</keyword>
<keyword id="KW-0963">Cytoplasm</keyword>
<keyword id="KW-0436">Ligase</keyword>
<keyword id="KW-0479">Metal-binding</keyword>
<keyword id="KW-0547">Nucleotide-binding</keyword>
<keyword id="KW-0648">Protein biosynthesis</keyword>
<keyword id="KW-0694">RNA-binding</keyword>
<keyword id="KW-0820">tRNA-binding</keyword>
<keyword id="KW-0862">Zinc</keyword>